<keyword id="KW-0460">Magnesium</keyword>
<keyword id="KW-0479">Metal-binding</keyword>
<keyword id="KW-0784">Thiamine biosynthesis</keyword>
<keyword id="KW-0808">Transferase</keyword>
<dbReference type="EC" id="2.5.1.3" evidence="1"/>
<dbReference type="EMBL" id="CP000511">
    <property type="protein sequence ID" value="ABM11545.1"/>
    <property type="molecule type" value="Genomic_DNA"/>
</dbReference>
<dbReference type="RefSeq" id="WP_011777982.1">
    <property type="nucleotide sequence ID" value="NZ_JACKSD010000046.1"/>
</dbReference>
<dbReference type="SMR" id="A1T2Z5"/>
<dbReference type="STRING" id="350058.Mvan_0707"/>
<dbReference type="KEGG" id="mva:Mvan_0707"/>
<dbReference type="eggNOG" id="COG0352">
    <property type="taxonomic scope" value="Bacteria"/>
</dbReference>
<dbReference type="HOGENOM" id="CLU_018272_3_0_11"/>
<dbReference type="UniPathway" id="UPA00060">
    <property type="reaction ID" value="UER00141"/>
</dbReference>
<dbReference type="Proteomes" id="UP000009159">
    <property type="component" value="Chromosome"/>
</dbReference>
<dbReference type="GO" id="GO:0005737">
    <property type="term" value="C:cytoplasm"/>
    <property type="evidence" value="ECO:0007669"/>
    <property type="project" value="TreeGrafter"/>
</dbReference>
<dbReference type="GO" id="GO:0000287">
    <property type="term" value="F:magnesium ion binding"/>
    <property type="evidence" value="ECO:0007669"/>
    <property type="project" value="UniProtKB-UniRule"/>
</dbReference>
<dbReference type="GO" id="GO:0004789">
    <property type="term" value="F:thiamine-phosphate diphosphorylase activity"/>
    <property type="evidence" value="ECO:0007669"/>
    <property type="project" value="UniProtKB-UniRule"/>
</dbReference>
<dbReference type="GO" id="GO:0009228">
    <property type="term" value="P:thiamine biosynthetic process"/>
    <property type="evidence" value="ECO:0007669"/>
    <property type="project" value="UniProtKB-KW"/>
</dbReference>
<dbReference type="GO" id="GO:0009229">
    <property type="term" value="P:thiamine diphosphate biosynthetic process"/>
    <property type="evidence" value="ECO:0007669"/>
    <property type="project" value="UniProtKB-UniRule"/>
</dbReference>
<dbReference type="CDD" id="cd00564">
    <property type="entry name" value="TMP_TenI"/>
    <property type="match status" value="1"/>
</dbReference>
<dbReference type="FunFam" id="3.20.20.70:FF:000178">
    <property type="entry name" value="Thiamine-phosphate synthase"/>
    <property type="match status" value="1"/>
</dbReference>
<dbReference type="Gene3D" id="3.20.20.70">
    <property type="entry name" value="Aldolase class I"/>
    <property type="match status" value="1"/>
</dbReference>
<dbReference type="HAMAP" id="MF_00097">
    <property type="entry name" value="TMP_synthase"/>
    <property type="match status" value="1"/>
</dbReference>
<dbReference type="InterPro" id="IPR013785">
    <property type="entry name" value="Aldolase_TIM"/>
</dbReference>
<dbReference type="InterPro" id="IPR036206">
    <property type="entry name" value="ThiamineP_synth_sf"/>
</dbReference>
<dbReference type="InterPro" id="IPR022998">
    <property type="entry name" value="ThiamineP_synth_TenI"/>
</dbReference>
<dbReference type="InterPro" id="IPR034291">
    <property type="entry name" value="TMP_synthase"/>
</dbReference>
<dbReference type="NCBIfam" id="TIGR00693">
    <property type="entry name" value="thiE"/>
    <property type="match status" value="1"/>
</dbReference>
<dbReference type="PANTHER" id="PTHR20857">
    <property type="entry name" value="THIAMINE-PHOSPHATE PYROPHOSPHORYLASE"/>
    <property type="match status" value="1"/>
</dbReference>
<dbReference type="PANTHER" id="PTHR20857:SF15">
    <property type="entry name" value="THIAMINE-PHOSPHATE SYNTHASE"/>
    <property type="match status" value="1"/>
</dbReference>
<dbReference type="Pfam" id="PF02581">
    <property type="entry name" value="TMP-TENI"/>
    <property type="match status" value="1"/>
</dbReference>
<dbReference type="SUPFAM" id="SSF51391">
    <property type="entry name" value="Thiamin phosphate synthase"/>
    <property type="match status" value="1"/>
</dbReference>
<gene>
    <name evidence="1" type="primary">thiE</name>
    <name type="ordered locus">Mvan_0707</name>
</gene>
<feature type="chain" id="PRO_0000336413" description="Thiamine-phosphate synthase">
    <location>
        <begin position="1"/>
        <end position="221"/>
    </location>
</feature>
<feature type="binding site" evidence="1">
    <location>
        <begin position="41"/>
        <end position="45"/>
    </location>
    <ligand>
        <name>4-amino-2-methyl-5-(diphosphooxymethyl)pyrimidine</name>
        <dbReference type="ChEBI" id="CHEBI:57841"/>
    </ligand>
</feature>
<feature type="binding site" evidence="1">
    <location>
        <position position="82"/>
    </location>
    <ligand>
        <name>4-amino-2-methyl-5-(diphosphooxymethyl)pyrimidine</name>
        <dbReference type="ChEBI" id="CHEBI:57841"/>
    </ligand>
</feature>
<feature type="binding site" evidence="1">
    <location>
        <position position="83"/>
    </location>
    <ligand>
        <name>Mg(2+)</name>
        <dbReference type="ChEBI" id="CHEBI:18420"/>
    </ligand>
</feature>
<feature type="binding site" evidence="1">
    <location>
        <position position="102"/>
    </location>
    <ligand>
        <name>Mg(2+)</name>
        <dbReference type="ChEBI" id="CHEBI:18420"/>
    </ligand>
</feature>
<feature type="binding site" evidence="1">
    <location>
        <position position="120"/>
    </location>
    <ligand>
        <name>4-amino-2-methyl-5-(diphosphooxymethyl)pyrimidine</name>
        <dbReference type="ChEBI" id="CHEBI:57841"/>
    </ligand>
</feature>
<feature type="binding site" evidence="1">
    <location>
        <begin position="146"/>
        <end position="148"/>
    </location>
    <ligand>
        <name>2-[(2R,5Z)-2-carboxy-4-methylthiazol-5(2H)-ylidene]ethyl phosphate</name>
        <dbReference type="ChEBI" id="CHEBI:62899"/>
    </ligand>
</feature>
<feature type="binding site" evidence="1">
    <location>
        <position position="149"/>
    </location>
    <ligand>
        <name>4-amino-2-methyl-5-(diphosphooxymethyl)pyrimidine</name>
        <dbReference type="ChEBI" id="CHEBI:57841"/>
    </ligand>
</feature>
<feature type="binding site" evidence="1">
    <location>
        <position position="177"/>
    </location>
    <ligand>
        <name>2-[(2R,5Z)-2-carboxy-4-methylthiazol-5(2H)-ylidene]ethyl phosphate</name>
        <dbReference type="ChEBI" id="CHEBI:62899"/>
    </ligand>
</feature>
<comment type="function">
    <text evidence="1">Condenses 4-methyl-5-(beta-hydroxyethyl)thiazole monophosphate (THZ-P) and 2-methyl-4-amino-5-hydroxymethyl pyrimidine pyrophosphate (HMP-PP) to form thiamine monophosphate (TMP).</text>
</comment>
<comment type="catalytic activity">
    <reaction evidence="1">
        <text>2-[(2R,5Z)-2-carboxy-4-methylthiazol-5(2H)-ylidene]ethyl phosphate + 4-amino-2-methyl-5-(diphosphooxymethyl)pyrimidine + 2 H(+) = thiamine phosphate + CO2 + diphosphate</text>
        <dbReference type="Rhea" id="RHEA:47844"/>
        <dbReference type="ChEBI" id="CHEBI:15378"/>
        <dbReference type="ChEBI" id="CHEBI:16526"/>
        <dbReference type="ChEBI" id="CHEBI:33019"/>
        <dbReference type="ChEBI" id="CHEBI:37575"/>
        <dbReference type="ChEBI" id="CHEBI:57841"/>
        <dbReference type="ChEBI" id="CHEBI:62899"/>
        <dbReference type="EC" id="2.5.1.3"/>
    </reaction>
</comment>
<comment type="catalytic activity">
    <reaction evidence="1">
        <text>2-(2-carboxy-4-methylthiazol-5-yl)ethyl phosphate + 4-amino-2-methyl-5-(diphosphooxymethyl)pyrimidine + 2 H(+) = thiamine phosphate + CO2 + diphosphate</text>
        <dbReference type="Rhea" id="RHEA:47848"/>
        <dbReference type="ChEBI" id="CHEBI:15378"/>
        <dbReference type="ChEBI" id="CHEBI:16526"/>
        <dbReference type="ChEBI" id="CHEBI:33019"/>
        <dbReference type="ChEBI" id="CHEBI:37575"/>
        <dbReference type="ChEBI" id="CHEBI:57841"/>
        <dbReference type="ChEBI" id="CHEBI:62890"/>
        <dbReference type="EC" id="2.5.1.3"/>
    </reaction>
</comment>
<comment type="catalytic activity">
    <reaction evidence="1">
        <text>4-methyl-5-(2-phosphooxyethyl)-thiazole + 4-amino-2-methyl-5-(diphosphooxymethyl)pyrimidine + H(+) = thiamine phosphate + diphosphate</text>
        <dbReference type="Rhea" id="RHEA:22328"/>
        <dbReference type="ChEBI" id="CHEBI:15378"/>
        <dbReference type="ChEBI" id="CHEBI:33019"/>
        <dbReference type="ChEBI" id="CHEBI:37575"/>
        <dbReference type="ChEBI" id="CHEBI:57841"/>
        <dbReference type="ChEBI" id="CHEBI:58296"/>
        <dbReference type="EC" id="2.5.1.3"/>
    </reaction>
</comment>
<comment type="cofactor">
    <cofactor evidence="1">
        <name>Mg(2+)</name>
        <dbReference type="ChEBI" id="CHEBI:18420"/>
    </cofactor>
    <text evidence="1">Binds 1 Mg(2+) ion per subunit.</text>
</comment>
<comment type="pathway">
    <text evidence="1">Cofactor biosynthesis; thiamine diphosphate biosynthesis; thiamine phosphate from 4-amino-2-methyl-5-diphosphomethylpyrimidine and 4-methyl-5-(2-phosphoethyl)-thiazole: step 1/1.</text>
</comment>
<comment type="similarity">
    <text evidence="1">Belongs to the thiamine-phosphate synthase family.</text>
</comment>
<proteinExistence type="inferred from homology"/>
<accession>A1T2Z5</accession>
<name>THIE_MYCVP</name>
<protein>
    <recommendedName>
        <fullName evidence="1">Thiamine-phosphate synthase</fullName>
        <shortName evidence="1">TP synthase</shortName>
        <shortName evidence="1">TPS</shortName>
        <ecNumber evidence="1">2.5.1.3</ecNumber>
    </recommendedName>
    <alternativeName>
        <fullName evidence="1">Thiamine-phosphate pyrophosphorylase</fullName>
        <shortName evidence="1">TMP pyrophosphorylase</shortName>
        <shortName evidence="1">TMP-PPase</shortName>
    </alternativeName>
</protein>
<organism>
    <name type="scientific">Mycolicibacterium vanbaalenii (strain DSM 7251 / JCM 13017 / BCRC 16820 / KCTC 9966 / NRRL B-24157 / PYR-1)</name>
    <name type="common">Mycobacterium vanbaalenii</name>
    <dbReference type="NCBI Taxonomy" id="350058"/>
    <lineage>
        <taxon>Bacteria</taxon>
        <taxon>Bacillati</taxon>
        <taxon>Actinomycetota</taxon>
        <taxon>Actinomycetes</taxon>
        <taxon>Mycobacteriales</taxon>
        <taxon>Mycobacteriaceae</taxon>
        <taxon>Mycolicibacterium</taxon>
    </lineage>
</organism>
<evidence type="ECO:0000255" key="1">
    <source>
        <dbReference type="HAMAP-Rule" id="MF_00097"/>
    </source>
</evidence>
<sequence length="221" mass="23323">MRESRKLDSAALYLCTDARRERGDLAEFADAALAGGVDIIQLRDKGSAGEQRFGPLEAREEIEVLATLADAARRHGALFAVNDRADIALAADADVLHLGQDDLPLTVARRIVGDRIVGRSTHDLDQVRAAVGEDVNYFCVGPCWPTPTKPGRPAPGLDLIRATAALGTDKPWFAIGGIDAERLPEVLDAGARRVVVVRAITAADDPGAAAQRLAGMLSAAG</sequence>
<reference key="1">
    <citation type="submission" date="2006-12" db="EMBL/GenBank/DDBJ databases">
        <title>Complete sequence of Mycobacterium vanbaalenii PYR-1.</title>
        <authorList>
            <consortium name="US DOE Joint Genome Institute"/>
            <person name="Copeland A."/>
            <person name="Lucas S."/>
            <person name="Lapidus A."/>
            <person name="Barry K."/>
            <person name="Detter J.C."/>
            <person name="Glavina del Rio T."/>
            <person name="Hammon N."/>
            <person name="Israni S."/>
            <person name="Dalin E."/>
            <person name="Tice H."/>
            <person name="Pitluck S."/>
            <person name="Singan V."/>
            <person name="Schmutz J."/>
            <person name="Larimer F."/>
            <person name="Land M."/>
            <person name="Hauser L."/>
            <person name="Kyrpides N."/>
            <person name="Anderson I.J."/>
            <person name="Miller C."/>
            <person name="Richardson P."/>
        </authorList>
    </citation>
    <scope>NUCLEOTIDE SEQUENCE [LARGE SCALE GENOMIC DNA]</scope>
    <source>
        <strain>DSM 7251 / JCM 13017 / BCRC 16820 / KCTC 9966 / NRRL B-24157 / PYR-1</strain>
    </source>
</reference>